<protein>
    <recommendedName>
        <fullName evidence="1">3-isopropylmalate dehydratase large subunit</fullName>
        <ecNumber evidence="1">4.2.1.33</ecNumber>
    </recommendedName>
    <alternativeName>
        <fullName evidence="1">Alpha-IPM isomerase</fullName>
        <shortName evidence="1">IPMI</shortName>
    </alternativeName>
    <alternativeName>
        <fullName evidence="1">Isopropylmalate isomerase</fullName>
    </alternativeName>
</protein>
<accession>B7KH96</accession>
<proteinExistence type="inferred from homology"/>
<keyword id="KW-0004">4Fe-4S</keyword>
<keyword id="KW-0028">Amino-acid biosynthesis</keyword>
<keyword id="KW-0100">Branched-chain amino acid biosynthesis</keyword>
<keyword id="KW-0408">Iron</keyword>
<keyword id="KW-0411">Iron-sulfur</keyword>
<keyword id="KW-0432">Leucine biosynthesis</keyword>
<keyword id="KW-0456">Lyase</keyword>
<keyword id="KW-0479">Metal-binding</keyword>
<keyword id="KW-1185">Reference proteome</keyword>
<feature type="chain" id="PRO_1000135677" description="3-isopropylmalate dehydratase large subunit">
    <location>
        <begin position="1"/>
        <end position="467"/>
    </location>
</feature>
<feature type="binding site" evidence="1">
    <location>
        <position position="347"/>
    </location>
    <ligand>
        <name>[4Fe-4S] cluster</name>
        <dbReference type="ChEBI" id="CHEBI:49883"/>
    </ligand>
</feature>
<feature type="binding site" evidence="1">
    <location>
        <position position="407"/>
    </location>
    <ligand>
        <name>[4Fe-4S] cluster</name>
        <dbReference type="ChEBI" id="CHEBI:49883"/>
    </ligand>
</feature>
<feature type="binding site" evidence="1">
    <location>
        <position position="410"/>
    </location>
    <ligand>
        <name>[4Fe-4S] cluster</name>
        <dbReference type="ChEBI" id="CHEBI:49883"/>
    </ligand>
</feature>
<name>LEUC_GLOC7</name>
<dbReference type="EC" id="4.2.1.33" evidence="1"/>
<dbReference type="EMBL" id="CP001291">
    <property type="protein sequence ID" value="ACK69305.1"/>
    <property type="molecule type" value="Genomic_DNA"/>
</dbReference>
<dbReference type="RefSeq" id="WP_012598252.1">
    <property type="nucleotide sequence ID" value="NC_011729.1"/>
</dbReference>
<dbReference type="SMR" id="B7KH96"/>
<dbReference type="STRING" id="65393.PCC7424_0849"/>
<dbReference type="KEGG" id="cyc:PCC7424_0849"/>
<dbReference type="eggNOG" id="COG0065">
    <property type="taxonomic scope" value="Bacteria"/>
</dbReference>
<dbReference type="HOGENOM" id="CLU_006714_3_4_3"/>
<dbReference type="OrthoDB" id="9802769at2"/>
<dbReference type="UniPathway" id="UPA00048">
    <property type="reaction ID" value="UER00071"/>
</dbReference>
<dbReference type="Proteomes" id="UP000002384">
    <property type="component" value="Chromosome"/>
</dbReference>
<dbReference type="GO" id="GO:0003861">
    <property type="term" value="F:3-isopropylmalate dehydratase activity"/>
    <property type="evidence" value="ECO:0007669"/>
    <property type="project" value="UniProtKB-UniRule"/>
</dbReference>
<dbReference type="GO" id="GO:0051539">
    <property type="term" value="F:4 iron, 4 sulfur cluster binding"/>
    <property type="evidence" value="ECO:0007669"/>
    <property type="project" value="UniProtKB-KW"/>
</dbReference>
<dbReference type="GO" id="GO:0046872">
    <property type="term" value="F:metal ion binding"/>
    <property type="evidence" value="ECO:0007669"/>
    <property type="project" value="UniProtKB-KW"/>
</dbReference>
<dbReference type="GO" id="GO:0009098">
    <property type="term" value="P:L-leucine biosynthetic process"/>
    <property type="evidence" value="ECO:0007669"/>
    <property type="project" value="UniProtKB-UniRule"/>
</dbReference>
<dbReference type="CDD" id="cd01583">
    <property type="entry name" value="IPMI"/>
    <property type="match status" value="1"/>
</dbReference>
<dbReference type="Gene3D" id="3.30.499.10">
    <property type="entry name" value="Aconitase, domain 3"/>
    <property type="match status" value="2"/>
</dbReference>
<dbReference type="HAMAP" id="MF_01026">
    <property type="entry name" value="LeuC_type1"/>
    <property type="match status" value="1"/>
</dbReference>
<dbReference type="InterPro" id="IPR004430">
    <property type="entry name" value="3-IsopropMal_deHydase_lsu"/>
</dbReference>
<dbReference type="InterPro" id="IPR015931">
    <property type="entry name" value="Acnase/IPM_dHydase_lsu_aba_1/3"/>
</dbReference>
<dbReference type="InterPro" id="IPR001030">
    <property type="entry name" value="Acoase/IPM_deHydtase_lsu_aba"/>
</dbReference>
<dbReference type="InterPro" id="IPR018136">
    <property type="entry name" value="Aconitase_4Fe-4S_BS"/>
</dbReference>
<dbReference type="InterPro" id="IPR036008">
    <property type="entry name" value="Aconitase_4Fe-4S_dom"/>
</dbReference>
<dbReference type="InterPro" id="IPR050067">
    <property type="entry name" value="IPM_dehydratase_rel_enz"/>
</dbReference>
<dbReference type="InterPro" id="IPR033941">
    <property type="entry name" value="IPMI_cat"/>
</dbReference>
<dbReference type="NCBIfam" id="TIGR00170">
    <property type="entry name" value="leuC"/>
    <property type="match status" value="1"/>
</dbReference>
<dbReference type="NCBIfam" id="NF004016">
    <property type="entry name" value="PRK05478.1"/>
    <property type="match status" value="1"/>
</dbReference>
<dbReference type="NCBIfam" id="NF009116">
    <property type="entry name" value="PRK12466.1"/>
    <property type="match status" value="1"/>
</dbReference>
<dbReference type="PANTHER" id="PTHR43822:SF9">
    <property type="entry name" value="3-ISOPROPYLMALATE DEHYDRATASE"/>
    <property type="match status" value="1"/>
</dbReference>
<dbReference type="PANTHER" id="PTHR43822">
    <property type="entry name" value="HOMOACONITASE, MITOCHONDRIAL-RELATED"/>
    <property type="match status" value="1"/>
</dbReference>
<dbReference type="Pfam" id="PF00330">
    <property type="entry name" value="Aconitase"/>
    <property type="match status" value="1"/>
</dbReference>
<dbReference type="PRINTS" id="PR00415">
    <property type="entry name" value="ACONITASE"/>
</dbReference>
<dbReference type="SUPFAM" id="SSF53732">
    <property type="entry name" value="Aconitase iron-sulfur domain"/>
    <property type="match status" value="1"/>
</dbReference>
<dbReference type="PROSITE" id="PS00450">
    <property type="entry name" value="ACONITASE_1"/>
    <property type="match status" value="1"/>
</dbReference>
<dbReference type="PROSITE" id="PS01244">
    <property type="entry name" value="ACONITASE_2"/>
    <property type="match status" value="1"/>
</dbReference>
<sequence>MSKGTLFDKVWDLHTVRILPSGQTQLFIGLHLIHEVTSPQAFAMLRERNLKVLFPDRTVATVDHIVPTENQARPFIDDLAEEMMRAIETNAKDNNIRFYNIGSGNQGIVHVIAPEQGLTQPGMTIACGDSHTSTHGAFGAIAFGIGTSQVRDVLATQTLALSKLKVRKIEVNGKLSPGVYAKDVILHIIRKLGVKGGVGYAYEYAGTTFESMSMEERMTVCNMSIEGGARCGYINPDGVTFEYLKGRDFSPQGEDWDKAVDWWKSIRSDEDAQYDDVVVFEAADIEPTVTWGITPGQGIGVSEAVPTPESLAESDRYIAKEAYEYMKLIPGSPIKGTKIDVCFIGSCTNGRISDLREAAKFAQGRQVATGVKAFVVPGSERVKQQAEAEGLDKIFVEAGFEWREAGCSMCLAMNPDKLQGDQISASSSNRNFKGRQGSSTGRTLLMSPAMVVAAAVNGKVADVREFI</sequence>
<evidence type="ECO:0000255" key="1">
    <source>
        <dbReference type="HAMAP-Rule" id="MF_01026"/>
    </source>
</evidence>
<gene>
    <name evidence="1" type="primary">leuC</name>
    <name type="ordered locus">PCC7424_0849</name>
</gene>
<organism>
    <name type="scientific">Gloeothece citriformis (strain PCC 7424)</name>
    <name type="common">Cyanothece sp. (strain PCC 7424)</name>
    <dbReference type="NCBI Taxonomy" id="65393"/>
    <lineage>
        <taxon>Bacteria</taxon>
        <taxon>Bacillati</taxon>
        <taxon>Cyanobacteriota</taxon>
        <taxon>Cyanophyceae</taxon>
        <taxon>Oscillatoriophycideae</taxon>
        <taxon>Chroococcales</taxon>
        <taxon>Aphanothecaceae</taxon>
        <taxon>Gloeothece</taxon>
        <taxon>Gloeothece citriformis</taxon>
    </lineage>
</organism>
<reference key="1">
    <citation type="journal article" date="2011" name="MBio">
        <title>Novel metabolic attributes of the genus Cyanothece, comprising a group of unicellular nitrogen-fixing Cyanobacteria.</title>
        <authorList>
            <person name="Bandyopadhyay A."/>
            <person name="Elvitigala T."/>
            <person name="Welsh E."/>
            <person name="Stockel J."/>
            <person name="Liberton M."/>
            <person name="Min H."/>
            <person name="Sherman L.A."/>
            <person name="Pakrasi H.B."/>
        </authorList>
    </citation>
    <scope>NUCLEOTIDE SEQUENCE [LARGE SCALE GENOMIC DNA]</scope>
    <source>
        <strain>PCC 7424</strain>
    </source>
</reference>
<comment type="function">
    <text evidence="1">Catalyzes the isomerization between 2-isopropylmalate and 3-isopropylmalate, via the formation of 2-isopropylmaleate.</text>
</comment>
<comment type="catalytic activity">
    <reaction evidence="1">
        <text>(2R,3S)-3-isopropylmalate = (2S)-2-isopropylmalate</text>
        <dbReference type="Rhea" id="RHEA:32287"/>
        <dbReference type="ChEBI" id="CHEBI:1178"/>
        <dbReference type="ChEBI" id="CHEBI:35121"/>
        <dbReference type="EC" id="4.2.1.33"/>
    </reaction>
</comment>
<comment type="cofactor">
    <cofactor evidence="1">
        <name>[4Fe-4S] cluster</name>
        <dbReference type="ChEBI" id="CHEBI:49883"/>
    </cofactor>
    <text evidence="1">Binds 1 [4Fe-4S] cluster per subunit.</text>
</comment>
<comment type="pathway">
    <text evidence="1">Amino-acid biosynthesis; L-leucine biosynthesis; L-leucine from 3-methyl-2-oxobutanoate: step 2/4.</text>
</comment>
<comment type="subunit">
    <text evidence="1">Heterodimer of LeuC and LeuD.</text>
</comment>
<comment type="similarity">
    <text evidence="1">Belongs to the aconitase/IPM isomerase family. LeuC type 1 subfamily.</text>
</comment>